<gene>
    <name evidence="1" type="primary">mraY</name>
    <name type="ordered locus">RMA_0942</name>
</gene>
<sequence>MLYNLLLPHIHNSHIANLFHYITFRSGLAIIITLSLSFITGPILIKFLRSLQKNGQPIRSDGPESHQTKVGTPTMGGIMIILSSCLSTLLLADLTNKYTWITLFGFISFGIIGFMDDYAKVTKNNHYGVRGKSKLLLQGIISFIICVLLEYLDKSPSHLLNVPFFKNLSLDLGYFYIVFAIFVIVGSSNAVNLTDGLDGLATVPIAFTAGSFALISYLVGNLIYSNYLQLTYIPNTGELTVLCAGLVGSCLGFLWFNAQPAEVFMGDTGSLSLGGVLGIISVITKHEIVLAIVGGLFVIETASVILQVYYFKATKGKRIFKMAPLHHHFEKHGWAESKVVIRFWIISVIFALIGLSSLKLR</sequence>
<protein>
    <recommendedName>
        <fullName evidence="1">Phospho-N-acetylmuramoyl-pentapeptide-transferase</fullName>
        <ecNumber evidence="1">2.7.8.13</ecNumber>
    </recommendedName>
    <alternativeName>
        <fullName evidence="1">UDP-MurNAc-pentapeptide phosphotransferase</fullName>
    </alternativeName>
</protein>
<accession>A8F278</accession>
<name>MRAY_RICM5</name>
<reference key="1">
    <citation type="journal article" date="2007" name="Genome Res.">
        <title>Lateral gene transfer between obligate intracellular bacteria: evidence from the Rickettsia massiliae genome.</title>
        <authorList>
            <person name="Blanc G."/>
            <person name="Ogata H."/>
            <person name="Robert C."/>
            <person name="Audic S."/>
            <person name="Claverie J.-M."/>
            <person name="Raoult D."/>
        </authorList>
    </citation>
    <scope>NUCLEOTIDE SEQUENCE [LARGE SCALE GENOMIC DNA]</scope>
    <source>
        <strain>Mtu5</strain>
    </source>
</reference>
<organism>
    <name type="scientific">Rickettsia massiliae (strain Mtu5)</name>
    <dbReference type="NCBI Taxonomy" id="416276"/>
    <lineage>
        <taxon>Bacteria</taxon>
        <taxon>Pseudomonadati</taxon>
        <taxon>Pseudomonadota</taxon>
        <taxon>Alphaproteobacteria</taxon>
        <taxon>Rickettsiales</taxon>
        <taxon>Rickettsiaceae</taxon>
        <taxon>Rickettsieae</taxon>
        <taxon>Rickettsia</taxon>
        <taxon>spotted fever group</taxon>
    </lineage>
</organism>
<feature type="chain" id="PRO_0000332546" description="Phospho-N-acetylmuramoyl-pentapeptide-transferase">
    <location>
        <begin position="1"/>
        <end position="361"/>
    </location>
</feature>
<feature type="transmembrane region" description="Helical" evidence="1">
    <location>
        <begin position="28"/>
        <end position="48"/>
    </location>
</feature>
<feature type="transmembrane region" description="Helical" evidence="1">
    <location>
        <begin position="74"/>
        <end position="94"/>
    </location>
</feature>
<feature type="transmembrane region" description="Helical" evidence="1">
    <location>
        <begin position="99"/>
        <end position="119"/>
    </location>
</feature>
<feature type="transmembrane region" description="Helical" evidence="1">
    <location>
        <begin position="133"/>
        <end position="153"/>
    </location>
</feature>
<feature type="transmembrane region" description="Helical" evidence="1">
    <location>
        <begin position="168"/>
        <end position="188"/>
    </location>
</feature>
<feature type="transmembrane region" description="Helical" evidence="1">
    <location>
        <begin position="203"/>
        <end position="223"/>
    </location>
</feature>
<feature type="transmembrane region" description="Helical" evidence="1">
    <location>
        <begin position="236"/>
        <end position="256"/>
    </location>
</feature>
<feature type="transmembrane region" description="Helical" evidence="1">
    <location>
        <begin position="263"/>
        <end position="283"/>
    </location>
</feature>
<feature type="transmembrane region" description="Helical" evidence="1">
    <location>
        <begin position="288"/>
        <end position="308"/>
    </location>
</feature>
<feature type="transmembrane region" description="Helical" evidence="1">
    <location>
        <begin position="338"/>
        <end position="358"/>
    </location>
</feature>
<dbReference type="EC" id="2.7.8.13" evidence="1"/>
<dbReference type="EMBL" id="CP000683">
    <property type="protein sequence ID" value="ABV85014.1"/>
    <property type="status" value="ALT_INIT"/>
    <property type="molecule type" value="Genomic_DNA"/>
</dbReference>
<dbReference type="RefSeq" id="WP_014365610.1">
    <property type="nucleotide sequence ID" value="NC_009900.1"/>
</dbReference>
<dbReference type="SMR" id="A8F278"/>
<dbReference type="KEGG" id="rms:RMA_0942"/>
<dbReference type="HOGENOM" id="CLU_023982_0_0_5"/>
<dbReference type="UniPathway" id="UPA00219"/>
<dbReference type="Proteomes" id="UP000001311">
    <property type="component" value="Chromosome"/>
</dbReference>
<dbReference type="GO" id="GO:0005886">
    <property type="term" value="C:plasma membrane"/>
    <property type="evidence" value="ECO:0007669"/>
    <property type="project" value="UniProtKB-SubCell"/>
</dbReference>
<dbReference type="GO" id="GO:0046872">
    <property type="term" value="F:metal ion binding"/>
    <property type="evidence" value="ECO:0007669"/>
    <property type="project" value="UniProtKB-KW"/>
</dbReference>
<dbReference type="GO" id="GO:0008963">
    <property type="term" value="F:phospho-N-acetylmuramoyl-pentapeptide-transferase activity"/>
    <property type="evidence" value="ECO:0007669"/>
    <property type="project" value="UniProtKB-UniRule"/>
</dbReference>
<dbReference type="GO" id="GO:0051992">
    <property type="term" value="F:UDP-N-acetylmuramoyl-L-alanyl-D-glutamyl-meso-2,6-diaminopimelyl-D-alanyl-D-alanine:undecaprenyl-phosphate transferase activity"/>
    <property type="evidence" value="ECO:0007669"/>
    <property type="project" value="RHEA"/>
</dbReference>
<dbReference type="GO" id="GO:0051301">
    <property type="term" value="P:cell division"/>
    <property type="evidence" value="ECO:0007669"/>
    <property type="project" value="UniProtKB-KW"/>
</dbReference>
<dbReference type="GO" id="GO:0071555">
    <property type="term" value="P:cell wall organization"/>
    <property type="evidence" value="ECO:0007669"/>
    <property type="project" value="UniProtKB-KW"/>
</dbReference>
<dbReference type="GO" id="GO:0009252">
    <property type="term" value="P:peptidoglycan biosynthetic process"/>
    <property type="evidence" value="ECO:0007669"/>
    <property type="project" value="UniProtKB-UniRule"/>
</dbReference>
<dbReference type="GO" id="GO:0008360">
    <property type="term" value="P:regulation of cell shape"/>
    <property type="evidence" value="ECO:0007669"/>
    <property type="project" value="UniProtKB-KW"/>
</dbReference>
<dbReference type="CDD" id="cd06852">
    <property type="entry name" value="GT_MraY"/>
    <property type="match status" value="1"/>
</dbReference>
<dbReference type="HAMAP" id="MF_00038">
    <property type="entry name" value="MraY"/>
    <property type="match status" value="1"/>
</dbReference>
<dbReference type="InterPro" id="IPR000715">
    <property type="entry name" value="Glycosyl_transferase_4"/>
</dbReference>
<dbReference type="InterPro" id="IPR003524">
    <property type="entry name" value="PNAcMuramoyl-5peptid_Trfase"/>
</dbReference>
<dbReference type="InterPro" id="IPR018480">
    <property type="entry name" value="PNAcMuramoyl-5peptid_Trfase_CS"/>
</dbReference>
<dbReference type="NCBIfam" id="TIGR00445">
    <property type="entry name" value="mraY"/>
    <property type="match status" value="1"/>
</dbReference>
<dbReference type="PANTHER" id="PTHR22926">
    <property type="entry name" value="PHOSPHO-N-ACETYLMURAMOYL-PENTAPEPTIDE-TRANSFERASE"/>
    <property type="match status" value="1"/>
</dbReference>
<dbReference type="PANTHER" id="PTHR22926:SF5">
    <property type="entry name" value="PHOSPHO-N-ACETYLMURAMOYL-PENTAPEPTIDE-TRANSFERASE HOMOLOG"/>
    <property type="match status" value="1"/>
</dbReference>
<dbReference type="Pfam" id="PF00953">
    <property type="entry name" value="Glycos_transf_4"/>
    <property type="match status" value="1"/>
</dbReference>
<dbReference type="PROSITE" id="PS01347">
    <property type="entry name" value="MRAY_1"/>
    <property type="match status" value="1"/>
</dbReference>
<dbReference type="PROSITE" id="PS01348">
    <property type="entry name" value="MRAY_2"/>
    <property type="match status" value="1"/>
</dbReference>
<comment type="function">
    <text evidence="1">Catalyzes the initial step of the lipid cycle reactions in the biosynthesis of the cell wall peptidoglycan: transfers peptidoglycan precursor phospho-MurNAc-pentapeptide from UDP-MurNAc-pentapeptide onto the lipid carrier undecaprenyl phosphate, yielding undecaprenyl-pyrophosphoryl-MurNAc-pentapeptide, known as lipid I.</text>
</comment>
<comment type="catalytic activity">
    <reaction evidence="1">
        <text>UDP-N-acetyl-alpha-D-muramoyl-L-alanyl-gamma-D-glutamyl-meso-2,6-diaminopimeloyl-D-alanyl-D-alanine + di-trans,octa-cis-undecaprenyl phosphate = di-trans,octa-cis-undecaprenyl diphospho-N-acetyl-alpha-D-muramoyl-L-alanyl-D-glutamyl-meso-2,6-diaminopimeloyl-D-alanyl-D-alanine + UMP</text>
        <dbReference type="Rhea" id="RHEA:28386"/>
        <dbReference type="ChEBI" id="CHEBI:57865"/>
        <dbReference type="ChEBI" id="CHEBI:60392"/>
        <dbReference type="ChEBI" id="CHEBI:61386"/>
        <dbReference type="ChEBI" id="CHEBI:61387"/>
        <dbReference type="EC" id="2.7.8.13"/>
    </reaction>
</comment>
<comment type="cofactor">
    <cofactor evidence="1">
        <name>Mg(2+)</name>
        <dbReference type="ChEBI" id="CHEBI:18420"/>
    </cofactor>
</comment>
<comment type="pathway">
    <text evidence="1">Cell wall biogenesis; peptidoglycan biosynthesis.</text>
</comment>
<comment type="subcellular location">
    <subcellularLocation>
        <location evidence="1">Cell inner membrane</location>
        <topology evidence="1">Multi-pass membrane protein</topology>
    </subcellularLocation>
</comment>
<comment type="similarity">
    <text evidence="1">Belongs to the glycosyltransferase 4 family. MraY subfamily.</text>
</comment>
<comment type="sequence caution" evidence="2">
    <conflict type="erroneous initiation">
        <sequence resource="EMBL-CDS" id="ABV85014"/>
    </conflict>
</comment>
<evidence type="ECO:0000255" key="1">
    <source>
        <dbReference type="HAMAP-Rule" id="MF_00038"/>
    </source>
</evidence>
<evidence type="ECO:0000305" key="2"/>
<keyword id="KW-0131">Cell cycle</keyword>
<keyword id="KW-0132">Cell division</keyword>
<keyword id="KW-0997">Cell inner membrane</keyword>
<keyword id="KW-1003">Cell membrane</keyword>
<keyword id="KW-0133">Cell shape</keyword>
<keyword id="KW-0961">Cell wall biogenesis/degradation</keyword>
<keyword id="KW-0460">Magnesium</keyword>
<keyword id="KW-0472">Membrane</keyword>
<keyword id="KW-0479">Metal-binding</keyword>
<keyword id="KW-0573">Peptidoglycan synthesis</keyword>
<keyword id="KW-0808">Transferase</keyword>
<keyword id="KW-0812">Transmembrane</keyword>
<keyword id="KW-1133">Transmembrane helix</keyword>
<proteinExistence type="inferred from homology"/>